<accession>B9L7J3</accession>
<comment type="function">
    <text evidence="1">Binds directly to 23S rRNA. The L1 stalk is quite mobile in the ribosome, and is involved in E site tRNA release.</text>
</comment>
<comment type="function">
    <text evidence="1">Protein L1 is also a translational repressor protein, it controls the translation of the L11 operon by binding to its mRNA.</text>
</comment>
<comment type="subunit">
    <text evidence="1">Part of the 50S ribosomal subunit.</text>
</comment>
<comment type="similarity">
    <text evidence="1">Belongs to the universal ribosomal protein uL1 family.</text>
</comment>
<sequence>MAKKHSKRYQELLKKIDKDVYNLKEAAEKVKELKSAKFDETVELALKLGVDPRHADQMIRGSVVLPHGTGKTVKVAVLAKGAKADEAKEAGADIVGEEEVLEMIQNGNLDFDILIATPDMMGKLGRFGKILGPKGLMPNPKTGTVTMDVAQAVKNAKAGQVNFRVDKKGNMHVGIGKASFDAEKIYENAVAFIEKINKMKPASAKGRYIQNAALSLTMSPSVKLDVNELTEYK</sequence>
<keyword id="KW-0678">Repressor</keyword>
<keyword id="KW-0687">Ribonucleoprotein</keyword>
<keyword id="KW-0689">Ribosomal protein</keyword>
<keyword id="KW-0694">RNA-binding</keyword>
<keyword id="KW-0699">rRNA-binding</keyword>
<keyword id="KW-0810">Translation regulation</keyword>
<keyword id="KW-0820">tRNA-binding</keyword>
<proteinExistence type="inferred from homology"/>
<gene>
    <name evidence="1" type="primary">rplA</name>
    <name type="ordered locus">NAMH_0177</name>
</gene>
<reference key="1">
    <citation type="journal article" date="2009" name="PLoS Genet.">
        <title>Adaptations to submarine hydrothermal environments exemplified by the genome of Nautilia profundicola.</title>
        <authorList>
            <person name="Campbell B.J."/>
            <person name="Smith J.L."/>
            <person name="Hanson T.E."/>
            <person name="Klotz M.G."/>
            <person name="Stein L.Y."/>
            <person name="Lee C.K."/>
            <person name="Wu D."/>
            <person name="Robinson J.M."/>
            <person name="Khouri H.M."/>
            <person name="Eisen J.A."/>
            <person name="Cary S.C."/>
        </authorList>
    </citation>
    <scope>NUCLEOTIDE SEQUENCE [LARGE SCALE GENOMIC DNA]</scope>
    <source>
        <strain>ATCC BAA-1463 / DSM 18972 / AmH</strain>
    </source>
</reference>
<dbReference type="EMBL" id="CP001279">
    <property type="protein sequence ID" value="ACM92756.1"/>
    <property type="molecule type" value="Genomic_DNA"/>
</dbReference>
<dbReference type="RefSeq" id="WP_015901808.1">
    <property type="nucleotide sequence ID" value="NC_012115.1"/>
</dbReference>
<dbReference type="SMR" id="B9L7J3"/>
<dbReference type="STRING" id="598659.NAMH_0177"/>
<dbReference type="KEGG" id="nam:NAMH_0177"/>
<dbReference type="eggNOG" id="COG0081">
    <property type="taxonomic scope" value="Bacteria"/>
</dbReference>
<dbReference type="HOGENOM" id="CLU_062853_0_0_7"/>
<dbReference type="OrthoDB" id="9803740at2"/>
<dbReference type="Proteomes" id="UP000000448">
    <property type="component" value="Chromosome"/>
</dbReference>
<dbReference type="GO" id="GO:0022625">
    <property type="term" value="C:cytosolic large ribosomal subunit"/>
    <property type="evidence" value="ECO:0007669"/>
    <property type="project" value="TreeGrafter"/>
</dbReference>
<dbReference type="GO" id="GO:0019843">
    <property type="term" value="F:rRNA binding"/>
    <property type="evidence" value="ECO:0007669"/>
    <property type="project" value="UniProtKB-UniRule"/>
</dbReference>
<dbReference type="GO" id="GO:0003735">
    <property type="term" value="F:structural constituent of ribosome"/>
    <property type="evidence" value="ECO:0007669"/>
    <property type="project" value="InterPro"/>
</dbReference>
<dbReference type="GO" id="GO:0000049">
    <property type="term" value="F:tRNA binding"/>
    <property type="evidence" value="ECO:0007669"/>
    <property type="project" value="UniProtKB-KW"/>
</dbReference>
<dbReference type="GO" id="GO:0006417">
    <property type="term" value="P:regulation of translation"/>
    <property type="evidence" value="ECO:0007669"/>
    <property type="project" value="UniProtKB-KW"/>
</dbReference>
<dbReference type="GO" id="GO:0006412">
    <property type="term" value="P:translation"/>
    <property type="evidence" value="ECO:0007669"/>
    <property type="project" value="UniProtKB-UniRule"/>
</dbReference>
<dbReference type="CDD" id="cd00403">
    <property type="entry name" value="Ribosomal_L1"/>
    <property type="match status" value="1"/>
</dbReference>
<dbReference type="FunFam" id="3.40.50.790:FF:000001">
    <property type="entry name" value="50S ribosomal protein L1"/>
    <property type="match status" value="1"/>
</dbReference>
<dbReference type="Gene3D" id="3.30.190.20">
    <property type="match status" value="1"/>
</dbReference>
<dbReference type="Gene3D" id="3.40.50.790">
    <property type="match status" value="1"/>
</dbReference>
<dbReference type="HAMAP" id="MF_01318_B">
    <property type="entry name" value="Ribosomal_uL1_B"/>
    <property type="match status" value="1"/>
</dbReference>
<dbReference type="InterPro" id="IPR005878">
    <property type="entry name" value="Ribosom_uL1_bac-type"/>
</dbReference>
<dbReference type="InterPro" id="IPR002143">
    <property type="entry name" value="Ribosomal_uL1"/>
</dbReference>
<dbReference type="InterPro" id="IPR023674">
    <property type="entry name" value="Ribosomal_uL1-like"/>
</dbReference>
<dbReference type="InterPro" id="IPR028364">
    <property type="entry name" value="Ribosomal_uL1/biogenesis"/>
</dbReference>
<dbReference type="InterPro" id="IPR016095">
    <property type="entry name" value="Ribosomal_uL1_3-a/b-sand"/>
</dbReference>
<dbReference type="NCBIfam" id="TIGR01169">
    <property type="entry name" value="rplA_bact"/>
    <property type="match status" value="1"/>
</dbReference>
<dbReference type="PANTHER" id="PTHR36427">
    <property type="entry name" value="54S RIBOSOMAL PROTEIN L1, MITOCHONDRIAL"/>
    <property type="match status" value="1"/>
</dbReference>
<dbReference type="PANTHER" id="PTHR36427:SF3">
    <property type="entry name" value="LARGE RIBOSOMAL SUBUNIT PROTEIN UL1M"/>
    <property type="match status" value="1"/>
</dbReference>
<dbReference type="Pfam" id="PF00687">
    <property type="entry name" value="Ribosomal_L1"/>
    <property type="match status" value="1"/>
</dbReference>
<dbReference type="PIRSF" id="PIRSF002155">
    <property type="entry name" value="Ribosomal_L1"/>
    <property type="match status" value="1"/>
</dbReference>
<dbReference type="SUPFAM" id="SSF56808">
    <property type="entry name" value="Ribosomal protein L1"/>
    <property type="match status" value="1"/>
</dbReference>
<feature type="chain" id="PRO_1000214427" description="Large ribosomal subunit protein uL1">
    <location>
        <begin position="1"/>
        <end position="233"/>
    </location>
</feature>
<organism>
    <name type="scientific">Nautilia profundicola (strain ATCC BAA-1463 / DSM 18972 / AmH)</name>
    <dbReference type="NCBI Taxonomy" id="598659"/>
    <lineage>
        <taxon>Bacteria</taxon>
        <taxon>Pseudomonadati</taxon>
        <taxon>Campylobacterota</taxon>
        <taxon>Epsilonproteobacteria</taxon>
        <taxon>Nautiliales</taxon>
        <taxon>Nautiliaceae</taxon>
        <taxon>Nautilia</taxon>
    </lineage>
</organism>
<protein>
    <recommendedName>
        <fullName evidence="1">Large ribosomal subunit protein uL1</fullName>
    </recommendedName>
    <alternativeName>
        <fullName evidence="2">50S ribosomal protein L1</fullName>
    </alternativeName>
</protein>
<name>RL1_NAUPA</name>
<evidence type="ECO:0000255" key="1">
    <source>
        <dbReference type="HAMAP-Rule" id="MF_01318"/>
    </source>
</evidence>
<evidence type="ECO:0000305" key="2"/>